<gene>
    <name type="primary">AEP2</name>
    <name type="synonym">ATP13</name>
    <name type="ORF">SCRG_02178</name>
</gene>
<comment type="function">
    <text evidence="1">Required for translation of the mitochondrial OLI1 transcript coding for the mitochondrial ATP synthase subunit 9.</text>
</comment>
<comment type="subunit">
    <text evidence="1">Binds to the 5'UTR of the OLI1 mRNA.</text>
</comment>
<comment type="subcellular location">
    <subcellularLocation>
        <location evidence="1">Mitochondrion</location>
    </subcellularLocation>
</comment>
<comment type="similarity">
    <text evidence="3">Belongs to the AEP2 family.</text>
</comment>
<protein>
    <recommendedName>
        <fullName>ATPase expression protein 2, mitochondrial</fullName>
    </recommendedName>
</protein>
<accession>B3LMH0</accession>
<evidence type="ECO:0000250" key="1"/>
<evidence type="ECO:0000255" key="2"/>
<evidence type="ECO:0000305" key="3"/>
<name>AEP2_YEAS1</name>
<reference key="1">
    <citation type="submission" date="2005-03" db="EMBL/GenBank/DDBJ databases">
        <title>Annotation of the Saccharomyces cerevisiae RM11-1a genome.</title>
        <authorList>
            <consortium name="The Broad Institute Genome Sequencing Platform"/>
            <person name="Birren B.W."/>
            <person name="Lander E.S."/>
            <person name="Galagan J.E."/>
            <person name="Nusbaum C."/>
            <person name="Devon K."/>
            <person name="Cuomo C."/>
            <person name="Jaffe D.B."/>
            <person name="Butler J."/>
            <person name="Alvarez P."/>
            <person name="Gnerre S."/>
            <person name="Grabherr M."/>
            <person name="Kleber M."/>
            <person name="Mauceli E.W."/>
            <person name="Brockman W."/>
            <person name="MacCallum I.A."/>
            <person name="Rounsley S."/>
            <person name="Young S.K."/>
            <person name="LaButti K."/>
            <person name="Pushparaj V."/>
            <person name="DeCaprio D."/>
            <person name="Crawford M."/>
            <person name="Koehrsen M."/>
            <person name="Engels R."/>
            <person name="Montgomery P."/>
            <person name="Pearson M."/>
            <person name="Howarth C."/>
            <person name="Larson L."/>
            <person name="Luoma S."/>
            <person name="White J."/>
            <person name="O'Leary S."/>
            <person name="Kodira C.D."/>
            <person name="Zeng Q."/>
            <person name="Yandava C."/>
            <person name="Alvarado L."/>
            <person name="Pratt S."/>
            <person name="Kruglyak L."/>
        </authorList>
    </citation>
    <scope>NUCLEOTIDE SEQUENCE [LARGE SCALE GENOMIC DNA]</scope>
    <source>
        <strain>RM11-1a</strain>
    </source>
</reference>
<dbReference type="EMBL" id="CH408047">
    <property type="protein sequence ID" value="EDV11773.1"/>
    <property type="molecule type" value="Genomic_DNA"/>
</dbReference>
<dbReference type="HOGENOM" id="CLU_035070_0_0_1"/>
<dbReference type="OrthoDB" id="34352at4893"/>
<dbReference type="Proteomes" id="UP000008335">
    <property type="component" value="Unassembled WGS sequence"/>
</dbReference>
<dbReference type="GO" id="GO:0005739">
    <property type="term" value="C:mitochondrion"/>
    <property type="evidence" value="ECO:0007669"/>
    <property type="project" value="UniProtKB-SubCell"/>
</dbReference>
<dbReference type="GO" id="GO:0003723">
    <property type="term" value="F:RNA binding"/>
    <property type="evidence" value="ECO:0007669"/>
    <property type="project" value="UniProtKB-KW"/>
</dbReference>
<dbReference type="GO" id="GO:0006417">
    <property type="term" value="P:regulation of translation"/>
    <property type="evidence" value="ECO:0007669"/>
    <property type="project" value="UniProtKB-KW"/>
</dbReference>
<dbReference type="InterPro" id="IPR024319">
    <property type="entry name" value="ATPase_expression_mit"/>
</dbReference>
<dbReference type="Pfam" id="PF12921">
    <property type="entry name" value="ATP13"/>
    <property type="match status" value="1"/>
</dbReference>
<keyword id="KW-0496">Mitochondrion</keyword>
<keyword id="KW-0694">RNA-binding</keyword>
<keyword id="KW-0809">Transit peptide</keyword>
<keyword id="KW-0810">Translation regulation</keyword>
<proteinExistence type="inferred from homology"/>
<sequence>MWINRLVKHPSYSVLRFYTKRLCTVSVKSLREFGVLPNSTICHSVYPRRTYVMGRAVINDILIKKSYSTHTVCAIDRSKDENNGSAYDKFEAKGIPIDVHTLKRIISSSGMDESEFSKSISYLFAKTVDPEPKDVLSLEDLSFLLNKLYTQRFQIRRICRDINAKYSEFWFKLFSLYAEKVDAKRNQVNLRNTKLDACEIFDANLMIKNFIELGQLGKAQKILSFILDRNPDILLSPKNADISTIVHFLQLRCGALAPYWKIPDNSEQKQGFLRKMVRLGAKNTSIRLSSTYKAMDHQTLLKIADLALQEKKLLNSEDLLSTLIQSFGHLGQTQILERCIEHIWQISPQEFPSHVVIKHRGCYPSSKILVSILVSFYFNDHDLHRGLSILDSFIKHYPDVKLDALFWRRLFQLSHFAWTPANDKKATSVVRCWHLMKQWYASKRLRPSVDYETLRQLYDIMKKTGNFPLGIDVLRSFKPGIERTRAENAGKVNNIIIKYQKCIIKELVNRGRFSAVREFIDNYGFDRKMTKDLNIFCANRMFLRSKKMKNKIENKKEREKVRLDSFDDDEDDGMIIGSLW</sequence>
<feature type="transit peptide" description="Mitochondrion" evidence="2">
    <location>
        <begin position="1"/>
        <end position="40"/>
    </location>
</feature>
<feature type="chain" id="PRO_0000405634" description="ATPase expression protein 2, mitochondrial">
    <location>
        <begin position="41"/>
        <end position="580"/>
    </location>
</feature>
<organism>
    <name type="scientific">Saccharomyces cerevisiae (strain RM11-1a)</name>
    <name type="common">Baker's yeast</name>
    <dbReference type="NCBI Taxonomy" id="285006"/>
    <lineage>
        <taxon>Eukaryota</taxon>
        <taxon>Fungi</taxon>
        <taxon>Dikarya</taxon>
        <taxon>Ascomycota</taxon>
        <taxon>Saccharomycotina</taxon>
        <taxon>Saccharomycetes</taxon>
        <taxon>Saccharomycetales</taxon>
        <taxon>Saccharomycetaceae</taxon>
        <taxon>Saccharomyces</taxon>
    </lineage>
</organism>